<comment type="function">
    <text evidence="1">Catalyzes the oxidation of either pyridoxine 5'-phosphate (PNP) or pyridoxamine 5'-phosphate (PMP) into pyridoxal 5'-phosphate (PLP).</text>
</comment>
<comment type="catalytic activity">
    <reaction evidence="1">
        <text>pyridoxamine 5'-phosphate + O2 + H2O = pyridoxal 5'-phosphate + H2O2 + NH4(+)</text>
        <dbReference type="Rhea" id="RHEA:15817"/>
        <dbReference type="ChEBI" id="CHEBI:15377"/>
        <dbReference type="ChEBI" id="CHEBI:15379"/>
        <dbReference type="ChEBI" id="CHEBI:16240"/>
        <dbReference type="ChEBI" id="CHEBI:28938"/>
        <dbReference type="ChEBI" id="CHEBI:58451"/>
        <dbReference type="ChEBI" id="CHEBI:597326"/>
        <dbReference type="EC" id="1.4.3.5"/>
    </reaction>
</comment>
<comment type="catalytic activity">
    <reaction evidence="1">
        <text>pyridoxine 5'-phosphate + O2 = pyridoxal 5'-phosphate + H2O2</text>
        <dbReference type="Rhea" id="RHEA:15149"/>
        <dbReference type="ChEBI" id="CHEBI:15379"/>
        <dbReference type="ChEBI" id="CHEBI:16240"/>
        <dbReference type="ChEBI" id="CHEBI:58589"/>
        <dbReference type="ChEBI" id="CHEBI:597326"/>
        <dbReference type="EC" id="1.4.3.5"/>
    </reaction>
</comment>
<comment type="cofactor">
    <cofactor evidence="1">
        <name>FMN</name>
        <dbReference type="ChEBI" id="CHEBI:58210"/>
    </cofactor>
    <text evidence="1">Binds 1 FMN per subunit.</text>
</comment>
<comment type="pathway">
    <text evidence="1">Cofactor metabolism; pyridoxal 5'-phosphate salvage; pyridoxal 5'-phosphate from pyridoxamine 5'-phosphate: step 1/1.</text>
</comment>
<comment type="pathway">
    <text evidence="1">Cofactor metabolism; pyridoxal 5'-phosphate salvage; pyridoxal 5'-phosphate from pyridoxine 5'-phosphate: step 1/1.</text>
</comment>
<comment type="subunit">
    <text evidence="1">Homodimer.</text>
</comment>
<comment type="similarity">
    <text evidence="1">Belongs to the pyridoxamine 5'-phosphate oxidase family.</text>
</comment>
<gene>
    <name evidence="1" type="primary">pdxH</name>
    <name type="ordered locus">YPO2370</name>
    <name type="ordered locus">y1965</name>
    <name type="ordered locus">YP_2156</name>
</gene>
<protein>
    <recommendedName>
        <fullName evidence="1">Pyridoxine/pyridoxamine 5'-phosphate oxidase</fullName>
        <ecNumber evidence="1">1.4.3.5</ecNumber>
    </recommendedName>
    <alternativeName>
        <fullName evidence="1">PNP/PMP oxidase</fullName>
        <shortName evidence="1">PNPOx</shortName>
    </alternativeName>
    <alternativeName>
        <fullName evidence="1">Pyridoxal 5'-phosphate synthase</fullName>
    </alternativeName>
</protein>
<evidence type="ECO:0000255" key="1">
    <source>
        <dbReference type="HAMAP-Rule" id="MF_01629"/>
    </source>
</evidence>
<accession>Q8ZE19</accession>
<accession>Q0WEF2</accession>
<accession>Q74TJ9</accession>
<accession>Q7CIR9</accession>
<organism>
    <name type="scientific">Yersinia pestis</name>
    <dbReference type="NCBI Taxonomy" id="632"/>
    <lineage>
        <taxon>Bacteria</taxon>
        <taxon>Pseudomonadati</taxon>
        <taxon>Pseudomonadota</taxon>
        <taxon>Gammaproteobacteria</taxon>
        <taxon>Enterobacterales</taxon>
        <taxon>Yersiniaceae</taxon>
        <taxon>Yersinia</taxon>
    </lineage>
</organism>
<proteinExistence type="inferred from homology"/>
<keyword id="KW-0285">Flavoprotein</keyword>
<keyword id="KW-0288">FMN</keyword>
<keyword id="KW-0560">Oxidoreductase</keyword>
<keyword id="KW-0664">Pyridoxine biosynthesis</keyword>
<keyword id="KW-1185">Reference proteome</keyword>
<name>PDXH_YERPE</name>
<dbReference type="EC" id="1.4.3.5" evidence="1"/>
<dbReference type="EMBL" id="AL590842">
    <property type="protein sequence ID" value="CAL20998.1"/>
    <property type="molecule type" value="Genomic_DNA"/>
</dbReference>
<dbReference type="EMBL" id="AE009952">
    <property type="protein sequence ID" value="AAM85531.1"/>
    <property type="molecule type" value="Genomic_DNA"/>
</dbReference>
<dbReference type="EMBL" id="AE017042">
    <property type="protein sequence ID" value="AAS62364.1"/>
    <property type="molecule type" value="Genomic_DNA"/>
</dbReference>
<dbReference type="PIR" id="AC0289">
    <property type="entry name" value="AC0289"/>
</dbReference>
<dbReference type="RefSeq" id="WP_002210959.1">
    <property type="nucleotide sequence ID" value="NZ_WUCM01000049.1"/>
</dbReference>
<dbReference type="RefSeq" id="YP_002347336.1">
    <property type="nucleotide sequence ID" value="NC_003143.1"/>
</dbReference>
<dbReference type="SMR" id="Q8ZE19"/>
<dbReference type="STRING" id="214092.YPO2370"/>
<dbReference type="PaxDb" id="214092-YPO2370"/>
<dbReference type="DNASU" id="1146912"/>
<dbReference type="EnsemblBacteria" id="AAS62364">
    <property type="protein sequence ID" value="AAS62364"/>
    <property type="gene ID" value="YP_2156"/>
</dbReference>
<dbReference type="GeneID" id="57976305"/>
<dbReference type="KEGG" id="ype:YPO2370"/>
<dbReference type="KEGG" id="ypj:CH55_444"/>
<dbReference type="KEGG" id="ypk:y1965"/>
<dbReference type="KEGG" id="ypl:CH46_2737"/>
<dbReference type="KEGG" id="ypm:YP_2156"/>
<dbReference type="KEGG" id="ypv:BZ15_1157"/>
<dbReference type="KEGG" id="ypw:CH59_4199"/>
<dbReference type="PATRIC" id="fig|214092.21.peg.2777"/>
<dbReference type="eggNOG" id="COG0259">
    <property type="taxonomic scope" value="Bacteria"/>
</dbReference>
<dbReference type="HOGENOM" id="CLU_032263_2_2_6"/>
<dbReference type="OMA" id="AYFRTRP"/>
<dbReference type="OrthoDB" id="9780392at2"/>
<dbReference type="UniPathway" id="UPA01068">
    <property type="reaction ID" value="UER00304"/>
</dbReference>
<dbReference type="UniPathway" id="UPA01068">
    <property type="reaction ID" value="UER00305"/>
</dbReference>
<dbReference type="Proteomes" id="UP000000815">
    <property type="component" value="Chromosome"/>
</dbReference>
<dbReference type="Proteomes" id="UP000001019">
    <property type="component" value="Chromosome"/>
</dbReference>
<dbReference type="Proteomes" id="UP000002490">
    <property type="component" value="Chromosome"/>
</dbReference>
<dbReference type="GO" id="GO:0010181">
    <property type="term" value="F:FMN binding"/>
    <property type="evidence" value="ECO:0007669"/>
    <property type="project" value="UniProtKB-UniRule"/>
</dbReference>
<dbReference type="GO" id="GO:0004733">
    <property type="term" value="F:pyridoxamine phosphate oxidase activity"/>
    <property type="evidence" value="ECO:0000318"/>
    <property type="project" value="GO_Central"/>
</dbReference>
<dbReference type="GO" id="GO:0042823">
    <property type="term" value="P:pyridoxal phosphate biosynthetic process"/>
    <property type="evidence" value="ECO:0000318"/>
    <property type="project" value="GO_Central"/>
</dbReference>
<dbReference type="GO" id="GO:0008615">
    <property type="term" value="P:pyridoxine biosynthetic process"/>
    <property type="evidence" value="ECO:0007669"/>
    <property type="project" value="UniProtKB-KW"/>
</dbReference>
<dbReference type="FunFam" id="2.30.110.10:FF:000001">
    <property type="entry name" value="Pyridoxine/pyridoxamine 5'-phosphate oxidase"/>
    <property type="match status" value="1"/>
</dbReference>
<dbReference type="Gene3D" id="2.30.110.10">
    <property type="entry name" value="Electron Transport, Fmn-binding Protein, Chain A"/>
    <property type="match status" value="1"/>
</dbReference>
<dbReference type="HAMAP" id="MF_01629">
    <property type="entry name" value="PdxH"/>
    <property type="match status" value="1"/>
</dbReference>
<dbReference type="InterPro" id="IPR000659">
    <property type="entry name" value="Pyridox_Oxase"/>
</dbReference>
<dbReference type="InterPro" id="IPR019740">
    <property type="entry name" value="Pyridox_Oxase_CS"/>
</dbReference>
<dbReference type="InterPro" id="IPR011576">
    <property type="entry name" value="Pyridox_Oxase_N"/>
</dbReference>
<dbReference type="InterPro" id="IPR019576">
    <property type="entry name" value="Pyridoxamine_oxidase_dimer_C"/>
</dbReference>
<dbReference type="InterPro" id="IPR012349">
    <property type="entry name" value="Split_barrel_FMN-bd"/>
</dbReference>
<dbReference type="NCBIfam" id="TIGR00558">
    <property type="entry name" value="pdxH"/>
    <property type="match status" value="1"/>
</dbReference>
<dbReference type="NCBIfam" id="NF004231">
    <property type="entry name" value="PRK05679.1"/>
    <property type="match status" value="1"/>
</dbReference>
<dbReference type="PANTHER" id="PTHR10851:SF0">
    <property type="entry name" value="PYRIDOXINE-5'-PHOSPHATE OXIDASE"/>
    <property type="match status" value="1"/>
</dbReference>
<dbReference type="PANTHER" id="PTHR10851">
    <property type="entry name" value="PYRIDOXINE-5-PHOSPHATE OXIDASE"/>
    <property type="match status" value="1"/>
</dbReference>
<dbReference type="Pfam" id="PF10590">
    <property type="entry name" value="PNP_phzG_C"/>
    <property type="match status" value="1"/>
</dbReference>
<dbReference type="Pfam" id="PF01243">
    <property type="entry name" value="PNPOx_N"/>
    <property type="match status" value="1"/>
</dbReference>
<dbReference type="PIRSF" id="PIRSF000190">
    <property type="entry name" value="Pyd_amn-ph_oxd"/>
    <property type="match status" value="1"/>
</dbReference>
<dbReference type="SUPFAM" id="SSF50475">
    <property type="entry name" value="FMN-binding split barrel"/>
    <property type="match status" value="1"/>
</dbReference>
<dbReference type="PROSITE" id="PS01064">
    <property type="entry name" value="PYRIDOX_OXIDASE"/>
    <property type="match status" value="1"/>
</dbReference>
<reference key="1">
    <citation type="journal article" date="2001" name="Nature">
        <title>Genome sequence of Yersinia pestis, the causative agent of plague.</title>
        <authorList>
            <person name="Parkhill J."/>
            <person name="Wren B.W."/>
            <person name="Thomson N.R."/>
            <person name="Titball R.W."/>
            <person name="Holden M.T.G."/>
            <person name="Prentice M.B."/>
            <person name="Sebaihia M."/>
            <person name="James K.D."/>
            <person name="Churcher C.M."/>
            <person name="Mungall K.L."/>
            <person name="Baker S."/>
            <person name="Basham D."/>
            <person name="Bentley S.D."/>
            <person name="Brooks K."/>
            <person name="Cerdeno-Tarraga A.-M."/>
            <person name="Chillingworth T."/>
            <person name="Cronin A."/>
            <person name="Davies R.M."/>
            <person name="Davis P."/>
            <person name="Dougan G."/>
            <person name="Feltwell T."/>
            <person name="Hamlin N."/>
            <person name="Holroyd S."/>
            <person name="Jagels K."/>
            <person name="Karlyshev A.V."/>
            <person name="Leather S."/>
            <person name="Moule S."/>
            <person name="Oyston P.C.F."/>
            <person name="Quail M.A."/>
            <person name="Rutherford K.M."/>
            <person name="Simmonds M."/>
            <person name="Skelton J."/>
            <person name="Stevens K."/>
            <person name="Whitehead S."/>
            <person name="Barrell B.G."/>
        </authorList>
    </citation>
    <scope>NUCLEOTIDE SEQUENCE [LARGE SCALE GENOMIC DNA]</scope>
    <source>
        <strain>CO-92 / Biovar Orientalis</strain>
    </source>
</reference>
<reference key="2">
    <citation type="journal article" date="2002" name="J. Bacteriol.">
        <title>Genome sequence of Yersinia pestis KIM.</title>
        <authorList>
            <person name="Deng W."/>
            <person name="Burland V."/>
            <person name="Plunkett G. III"/>
            <person name="Boutin A."/>
            <person name="Mayhew G.F."/>
            <person name="Liss P."/>
            <person name="Perna N.T."/>
            <person name="Rose D.J."/>
            <person name="Mau B."/>
            <person name="Zhou S."/>
            <person name="Schwartz D.C."/>
            <person name="Fetherston J.D."/>
            <person name="Lindler L.E."/>
            <person name="Brubaker R.R."/>
            <person name="Plano G.V."/>
            <person name="Straley S.C."/>
            <person name="McDonough K.A."/>
            <person name="Nilles M.L."/>
            <person name="Matson J.S."/>
            <person name="Blattner F.R."/>
            <person name="Perry R.D."/>
        </authorList>
    </citation>
    <scope>NUCLEOTIDE SEQUENCE [LARGE SCALE GENOMIC DNA]</scope>
    <source>
        <strain>KIM10+ / Biovar Mediaevalis</strain>
    </source>
</reference>
<reference key="3">
    <citation type="journal article" date="2004" name="DNA Res.">
        <title>Complete genome sequence of Yersinia pestis strain 91001, an isolate avirulent to humans.</title>
        <authorList>
            <person name="Song Y."/>
            <person name="Tong Z."/>
            <person name="Wang J."/>
            <person name="Wang L."/>
            <person name="Guo Z."/>
            <person name="Han Y."/>
            <person name="Zhang J."/>
            <person name="Pei D."/>
            <person name="Zhou D."/>
            <person name="Qin H."/>
            <person name="Pang X."/>
            <person name="Han Y."/>
            <person name="Zhai J."/>
            <person name="Li M."/>
            <person name="Cui B."/>
            <person name="Qi Z."/>
            <person name="Jin L."/>
            <person name="Dai R."/>
            <person name="Chen F."/>
            <person name="Li S."/>
            <person name="Ye C."/>
            <person name="Du Z."/>
            <person name="Lin W."/>
            <person name="Wang J."/>
            <person name="Yu J."/>
            <person name="Yang H."/>
            <person name="Wang J."/>
            <person name="Huang P."/>
            <person name="Yang R."/>
        </authorList>
    </citation>
    <scope>NUCLEOTIDE SEQUENCE [LARGE SCALE GENOMIC DNA]</scope>
    <source>
        <strain>91001 / Biovar Mediaevalis</strain>
    </source>
</reference>
<sequence>MTENNEFDVADLRREYIRGGLRRSDLTENPLELFERWLKQACEARLPDPTAMCVATVDTNGQPYQRIVLLKHYDDQGLVFYTNLGSRKAQQLAENPHISLLFPWHMLDRQVIFLGKAERLSTLEVLKYFHSRPKDSQIGAWVSQQSSRISARGVLESKFLELKQKFQQGDVPLPSFWGGFRVKFDSVEFWQGGEHRLHDRFIYQREADAWKIDRLAP</sequence>
<feature type="chain" id="PRO_0000167779" description="Pyridoxine/pyridoxamine 5'-phosphate oxidase">
    <location>
        <begin position="1"/>
        <end position="217"/>
    </location>
</feature>
<feature type="binding site" evidence="1">
    <location>
        <begin position="13"/>
        <end position="16"/>
    </location>
    <ligand>
        <name>substrate</name>
    </ligand>
</feature>
<feature type="binding site" evidence="1">
    <location>
        <begin position="66"/>
        <end position="71"/>
    </location>
    <ligand>
        <name>FMN</name>
        <dbReference type="ChEBI" id="CHEBI:58210"/>
    </ligand>
</feature>
<feature type="binding site" evidence="1">
    <location>
        <position position="71"/>
    </location>
    <ligand>
        <name>substrate</name>
    </ligand>
</feature>
<feature type="binding site" evidence="1">
    <location>
        <begin position="81"/>
        <end position="82"/>
    </location>
    <ligand>
        <name>FMN</name>
        <dbReference type="ChEBI" id="CHEBI:58210"/>
    </ligand>
</feature>
<feature type="binding site" evidence="1">
    <location>
        <position position="87"/>
    </location>
    <ligand>
        <name>FMN</name>
        <dbReference type="ChEBI" id="CHEBI:58210"/>
    </ligand>
</feature>
<feature type="binding site" evidence="1">
    <location>
        <position position="88"/>
    </location>
    <ligand>
        <name>FMN</name>
        <dbReference type="ChEBI" id="CHEBI:58210"/>
    </ligand>
</feature>
<feature type="binding site" evidence="1">
    <location>
        <position position="110"/>
    </location>
    <ligand>
        <name>FMN</name>
        <dbReference type="ChEBI" id="CHEBI:58210"/>
    </ligand>
</feature>
<feature type="binding site" evidence="1">
    <location>
        <position position="128"/>
    </location>
    <ligand>
        <name>substrate</name>
    </ligand>
</feature>
<feature type="binding site" evidence="1">
    <location>
        <position position="132"/>
    </location>
    <ligand>
        <name>substrate</name>
    </ligand>
</feature>
<feature type="binding site" evidence="1">
    <location>
        <position position="136"/>
    </location>
    <ligand>
        <name>substrate</name>
    </ligand>
</feature>
<feature type="binding site" evidence="1">
    <location>
        <begin position="145"/>
        <end position="146"/>
    </location>
    <ligand>
        <name>FMN</name>
        <dbReference type="ChEBI" id="CHEBI:58210"/>
    </ligand>
</feature>
<feature type="binding site" evidence="1">
    <location>
        <position position="190"/>
    </location>
    <ligand>
        <name>FMN</name>
        <dbReference type="ChEBI" id="CHEBI:58210"/>
    </ligand>
</feature>
<feature type="binding site" evidence="1">
    <location>
        <begin position="196"/>
        <end position="198"/>
    </location>
    <ligand>
        <name>substrate</name>
    </ligand>
</feature>
<feature type="binding site" evidence="1">
    <location>
        <position position="200"/>
    </location>
    <ligand>
        <name>FMN</name>
        <dbReference type="ChEBI" id="CHEBI:58210"/>
    </ligand>
</feature>